<feature type="signal peptide" evidence="2">
    <location>
        <begin position="1"/>
        <end position="22"/>
    </location>
</feature>
<feature type="propeptide" id="PRO_0000400757" evidence="3 4">
    <location>
        <begin position="23"/>
        <end position="48"/>
    </location>
</feature>
<feature type="peptide" id="PRO_0000400758" description="U4-theraphotoxin-Hhn1a">
    <location>
        <begin position="49"/>
        <end position="85"/>
    </location>
</feature>
<feature type="disulfide bond" evidence="1">
    <location>
        <begin position="52"/>
        <end position="66"/>
    </location>
</feature>
<feature type="disulfide bond" evidence="1">
    <location>
        <begin position="56"/>
        <end position="77"/>
    </location>
</feature>
<feature type="disulfide bond" evidence="1">
    <location>
        <begin position="71"/>
        <end position="82"/>
    </location>
</feature>
<comment type="function">
    <text evidence="4">Neurotoxin active on both insects and mammals.</text>
</comment>
<comment type="subunit">
    <text>Monomer.</text>
</comment>
<comment type="subcellular location">
    <subcellularLocation>
        <location>Secreted</location>
    </subcellularLocation>
</comment>
<comment type="tissue specificity">
    <text>Expressed by the venom gland.</text>
</comment>
<comment type="mass spectrometry" mass="4253.38" method="MALDI" evidence="4"/>
<comment type="toxic dose">
    <text evidence="4">LD(50) is 1.41 mg/kg by intracerebroventricular injection into mice.</text>
</comment>
<comment type="toxic dose">
    <text evidence="4">PD(50) is 16 mg/kg in cockroaches.</text>
</comment>
<comment type="similarity">
    <text evidence="5">Belongs to the neurotoxin 12 (Hwtx-2) family. 02 (Hwtx-2) subfamily.</text>
</comment>
<name>H2A21_CYRHA</name>
<evidence type="ECO:0000250" key="1"/>
<evidence type="ECO:0000255" key="2"/>
<evidence type="ECO:0000269" key="3">
    <source>
    </source>
</evidence>
<evidence type="ECO:0000269" key="4">
    <source>
    </source>
</evidence>
<evidence type="ECO:0000305" key="5"/>
<accession>D2Y2K8</accession>
<dbReference type="EMBL" id="GU293085">
    <property type="protein sequence ID" value="ADB56901.1"/>
    <property type="molecule type" value="Genomic_DNA"/>
</dbReference>
<dbReference type="SMR" id="D2Y2K8"/>
<dbReference type="ArachnoServer" id="AS001783">
    <property type="toxin name" value="U4-theraphotoxin-Hhn1a"/>
</dbReference>
<dbReference type="GO" id="GO:0005576">
    <property type="term" value="C:extracellular region"/>
    <property type="evidence" value="ECO:0007669"/>
    <property type="project" value="UniProtKB-SubCell"/>
</dbReference>
<dbReference type="GO" id="GO:0035792">
    <property type="term" value="C:host cell postsynaptic membrane"/>
    <property type="evidence" value="ECO:0007669"/>
    <property type="project" value="UniProtKB-KW"/>
</dbReference>
<dbReference type="GO" id="GO:0090729">
    <property type="term" value="F:toxin activity"/>
    <property type="evidence" value="ECO:0007669"/>
    <property type="project" value="UniProtKB-KW"/>
</dbReference>
<dbReference type="InterPro" id="IPR012625">
    <property type="entry name" value="Hwtx-2-like"/>
</dbReference>
<dbReference type="Pfam" id="PF08089">
    <property type="entry name" value="Toxin_20"/>
    <property type="match status" value="1"/>
</dbReference>
<dbReference type="SUPFAM" id="SSF57059">
    <property type="entry name" value="omega toxin-like"/>
    <property type="match status" value="1"/>
</dbReference>
<dbReference type="PROSITE" id="PS60022">
    <property type="entry name" value="HWTX_2"/>
    <property type="match status" value="1"/>
</dbReference>
<protein>
    <recommendedName>
        <fullName>U4-theraphotoxin-Hhn1a</fullName>
        <shortName>U4-TRTX-Hhn1a</shortName>
    </recommendedName>
    <alternativeName>
        <fullName>Hainantoxin-II.21</fullName>
        <shortName>HNTX-II.21</shortName>
    </alternativeName>
    <alternativeName>
        <fullName>Peptide F8-20.15</fullName>
    </alternativeName>
</protein>
<proteinExistence type="evidence at protein level"/>
<organism>
    <name type="scientific">Cyriopagopus hainanus</name>
    <name type="common">Chinese bird spider</name>
    <name type="synonym">Haplopelma hainanum</name>
    <dbReference type="NCBI Taxonomy" id="209901"/>
    <lineage>
        <taxon>Eukaryota</taxon>
        <taxon>Metazoa</taxon>
        <taxon>Ecdysozoa</taxon>
        <taxon>Arthropoda</taxon>
        <taxon>Chelicerata</taxon>
        <taxon>Arachnida</taxon>
        <taxon>Araneae</taxon>
        <taxon>Mygalomorphae</taxon>
        <taxon>Theraphosidae</taxon>
        <taxon>Haplopelma</taxon>
    </lineage>
</organism>
<keyword id="KW-0903">Direct protein sequencing</keyword>
<keyword id="KW-1015">Disulfide bond</keyword>
<keyword id="KW-0528">Neurotoxin</keyword>
<keyword id="KW-0629">Postsynaptic neurotoxin</keyword>
<keyword id="KW-0964">Secreted</keyword>
<keyword id="KW-0732">Signal</keyword>
<keyword id="KW-0800">Toxin</keyword>
<sequence length="85" mass="9430">MKMTLIAILTCAAVLVLHTTAAEELEAESQLMEVGMPDTELAAVDEERLFECSVSCEIEKEGNKDCKKKKCKGGWKCKFNMCVKV</sequence>
<reference key="1">
    <citation type="journal article" date="2010" name="J. Proteome Res.">
        <title>Molecular diversification of peptide toxins from the tarantula Haplopelma hainanum (Ornithoctonus hainana) venom based on transcriptomic, peptidomic, and genomic analyses.</title>
        <authorList>
            <person name="Tang X."/>
            <person name="Zhang Y."/>
            <person name="Hu W."/>
            <person name="Xu D."/>
            <person name="Tao H."/>
            <person name="Yang X."/>
            <person name="Li Y."/>
            <person name="Jiang L."/>
            <person name="Liang S."/>
        </authorList>
    </citation>
    <scope>NUCLEOTIDE SEQUENCE [LARGE SCALE GENOMIC DNA]</scope>
    <scope>PROTEIN SEQUENCE OF 49-85</scope>
    <scope>IDENTIFICATION BY MASS SPECTROMETRY</scope>
    <source>
        <tissue>Venom</tissue>
        <tissue>Venom gland</tissue>
    </source>
</reference>
<reference key="2">
    <citation type="journal article" date="2010" name="Dong Wu Xue Yan Jiu">
        <title>Isolation and characterization of Hainantoxin-II, a new neurotoxic peptide from the Chinese bird spider (Haplopelma hainanum).</title>
        <authorList>
            <person name="Pan J.Y."/>
            <person name="Yu Z.Q."/>
        </authorList>
    </citation>
    <scope>PROTEIN SEQUENCE OF 49-85</scope>
    <scope>FUNCTION</scope>
    <scope>MASS SPECTROMETRY</scope>
    <scope>TOXIC DOSE</scope>
    <source>
        <tissue>Venom</tissue>
    </source>
</reference>